<dbReference type="EC" id="2.1.1.295"/>
<dbReference type="EMBL" id="AB054257">
    <property type="protein sequence ID" value="BAB62076.1"/>
    <property type="molecule type" value="mRNA"/>
</dbReference>
<dbReference type="EMBL" id="AL163818">
    <property type="protein sequence ID" value="CAB87794.1"/>
    <property type="molecule type" value="Genomic_DNA"/>
</dbReference>
<dbReference type="EMBL" id="CP002686">
    <property type="protein sequence ID" value="AEE80478.1"/>
    <property type="molecule type" value="Genomic_DNA"/>
</dbReference>
<dbReference type="EMBL" id="AK316671">
    <property type="protein sequence ID" value="BAH19400.1"/>
    <property type="molecule type" value="mRNA"/>
</dbReference>
<dbReference type="EMBL" id="BT025886">
    <property type="protein sequence ID" value="ABF85788.1"/>
    <property type="molecule type" value="mRNA"/>
</dbReference>
<dbReference type="EMBL" id="AY085864">
    <property type="protein sequence ID" value="AAM63077.1"/>
    <property type="molecule type" value="mRNA"/>
</dbReference>
<dbReference type="PIR" id="T49182">
    <property type="entry name" value="T49182"/>
</dbReference>
<dbReference type="RefSeq" id="NP_191900.1">
    <property type="nucleotide sequence ID" value="NM_116206.3"/>
</dbReference>
<dbReference type="BioGRID" id="10830">
    <property type="interactions" value="3"/>
</dbReference>
<dbReference type="FunCoup" id="Q9LY74">
    <property type="interactions" value="1295"/>
</dbReference>
<dbReference type="STRING" id="3702.Q9LY74"/>
<dbReference type="SwissLipids" id="SLP:000001493"/>
<dbReference type="iPTMnet" id="Q9LY74"/>
<dbReference type="PaxDb" id="3702-AT3G63410.1"/>
<dbReference type="ProteomicsDB" id="240675"/>
<dbReference type="EnsemblPlants" id="AT3G63410.1">
    <property type="protein sequence ID" value="AT3G63410.1"/>
    <property type="gene ID" value="AT3G63410"/>
</dbReference>
<dbReference type="GeneID" id="825516"/>
<dbReference type="Gramene" id="AT3G63410.1">
    <property type="protein sequence ID" value="AT3G63410.1"/>
    <property type="gene ID" value="AT3G63410"/>
</dbReference>
<dbReference type="KEGG" id="ath:AT3G63410"/>
<dbReference type="Araport" id="AT3G63410"/>
<dbReference type="TAIR" id="AT3G63410">
    <property type="gene designation" value="APG1"/>
</dbReference>
<dbReference type="eggNOG" id="KOG1540">
    <property type="taxonomic scope" value="Eukaryota"/>
</dbReference>
<dbReference type="HOGENOM" id="CLU_051421_0_0_1"/>
<dbReference type="InParanoid" id="Q9LY74"/>
<dbReference type="OMA" id="HARSIPR"/>
<dbReference type="OrthoDB" id="10017101at2759"/>
<dbReference type="PhylomeDB" id="Q9LY74"/>
<dbReference type="BRENDA" id="2.1.1.295">
    <property type="organism ID" value="399"/>
</dbReference>
<dbReference type="UniPathway" id="UPA00160"/>
<dbReference type="CD-CODE" id="4299E36E">
    <property type="entry name" value="Nucleolus"/>
</dbReference>
<dbReference type="PRO" id="PR:Q9LY74"/>
<dbReference type="Proteomes" id="UP000006548">
    <property type="component" value="Chromosome 3"/>
</dbReference>
<dbReference type="ExpressionAtlas" id="Q9LY74">
    <property type="expression patterns" value="baseline and differential"/>
</dbReference>
<dbReference type="GO" id="GO:0009507">
    <property type="term" value="C:chloroplast"/>
    <property type="evidence" value="ECO:0000314"/>
    <property type="project" value="TAIR"/>
</dbReference>
<dbReference type="GO" id="GO:0009941">
    <property type="term" value="C:chloroplast envelope"/>
    <property type="evidence" value="ECO:0007005"/>
    <property type="project" value="TAIR"/>
</dbReference>
<dbReference type="GO" id="GO:0009706">
    <property type="term" value="C:chloroplast inner membrane"/>
    <property type="evidence" value="ECO:0000250"/>
    <property type="project" value="TAIR"/>
</dbReference>
<dbReference type="GO" id="GO:0005829">
    <property type="term" value="C:cytosol"/>
    <property type="evidence" value="ECO:0007005"/>
    <property type="project" value="TAIR"/>
</dbReference>
<dbReference type="GO" id="GO:0009536">
    <property type="term" value="C:plastid"/>
    <property type="evidence" value="ECO:0007005"/>
    <property type="project" value="TAIR"/>
</dbReference>
<dbReference type="GO" id="GO:0102550">
    <property type="term" value="F:2-methyl-6-geranylgeranyl-1,4-benzoquinol methyltransferase activity"/>
    <property type="evidence" value="ECO:0007669"/>
    <property type="project" value="UniProtKB-EC"/>
</dbReference>
<dbReference type="GO" id="GO:0051741">
    <property type="term" value="F:2-methyl-6-phytyl-1,4-benzoquinone methyltransferase activity"/>
    <property type="evidence" value="ECO:0000314"/>
    <property type="project" value="TAIR"/>
</dbReference>
<dbReference type="GO" id="GO:0051742">
    <property type="term" value="F:2-methyl-6-solanyl-1,4-benzoquinone methyltransferase activity"/>
    <property type="evidence" value="ECO:0007669"/>
    <property type="project" value="RHEA"/>
</dbReference>
<dbReference type="GO" id="GO:0008757">
    <property type="term" value="F:S-adenosylmethionine-dependent methyltransferase activity"/>
    <property type="evidence" value="ECO:0000250"/>
    <property type="project" value="TAIR"/>
</dbReference>
<dbReference type="GO" id="GO:0032259">
    <property type="term" value="P:methylation"/>
    <property type="evidence" value="ECO:0007669"/>
    <property type="project" value="UniProtKB-KW"/>
</dbReference>
<dbReference type="GO" id="GO:0010236">
    <property type="term" value="P:plastoquinone biosynthetic process"/>
    <property type="evidence" value="ECO:0000315"/>
    <property type="project" value="TAIR"/>
</dbReference>
<dbReference type="GO" id="GO:0010189">
    <property type="term" value="P:vitamin E biosynthetic process"/>
    <property type="evidence" value="ECO:0000315"/>
    <property type="project" value="TAIR"/>
</dbReference>
<dbReference type="CDD" id="cd02440">
    <property type="entry name" value="AdoMet_MTases"/>
    <property type="match status" value="1"/>
</dbReference>
<dbReference type="FunFam" id="3.40.50.150:FF:000095">
    <property type="entry name" value="2-methyl-6-phytyl-1,4-hydroquinone methyltransferase, chloroplastic-like"/>
    <property type="match status" value="1"/>
</dbReference>
<dbReference type="Gene3D" id="3.40.50.150">
    <property type="entry name" value="Vaccinia Virus protein VP39"/>
    <property type="match status" value="1"/>
</dbReference>
<dbReference type="InterPro" id="IPR013216">
    <property type="entry name" value="Methyltransf_11"/>
</dbReference>
<dbReference type="InterPro" id="IPR044649">
    <property type="entry name" value="MPBQ/MSBQ_MT"/>
</dbReference>
<dbReference type="InterPro" id="IPR029063">
    <property type="entry name" value="SAM-dependent_MTases_sf"/>
</dbReference>
<dbReference type="InterPro" id="IPR031164">
    <property type="entry name" value="SAM_MPBQ_MSBQ_MT"/>
</dbReference>
<dbReference type="PANTHER" id="PTHR44516">
    <property type="entry name" value="2-METHYL-6-PHYTYL-1,4-HYDROQUINONE METHYLTRANSFERASE, CHLOROPLASTIC"/>
    <property type="match status" value="1"/>
</dbReference>
<dbReference type="PANTHER" id="PTHR44516:SF4">
    <property type="entry name" value="2-METHYL-6-PHYTYL-1,4-HYDROQUINONE METHYLTRANSFERASE, CHLOROPLASTIC"/>
    <property type="match status" value="1"/>
</dbReference>
<dbReference type="Pfam" id="PF08241">
    <property type="entry name" value="Methyltransf_11"/>
    <property type="match status" value="1"/>
</dbReference>
<dbReference type="SUPFAM" id="SSF53335">
    <property type="entry name" value="S-adenosyl-L-methionine-dependent methyltransferases"/>
    <property type="match status" value="1"/>
</dbReference>
<dbReference type="PROSITE" id="PS51734">
    <property type="entry name" value="SAM_MPBQ_MSBQ_MT"/>
    <property type="match status" value="1"/>
</dbReference>
<reference key="1">
    <citation type="journal article" date="2003" name="Plant J.">
        <title>Functional analysis of the 37 kDa inner envelope membrane polypeptide in chloroplast biogenesis using a Ds-tagged Arabidopsis pale-green mutant.</title>
        <authorList>
            <person name="Motohashi R."/>
            <person name="Ito T."/>
            <person name="Kobayashi M."/>
            <person name="Taji T."/>
            <person name="Nagata N."/>
            <person name="Asami T."/>
            <person name="Yoshida S."/>
            <person name="Yamaguchi-Shinozaki K."/>
            <person name="Shinozaki K."/>
        </authorList>
    </citation>
    <scope>NUCLEOTIDE SEQUENCE [MRNA]</scope>
    <source>
        <strain>cv. Columbia</strain>
    </source>
</reference>
<reference key="2">
    <citation type="journal article" date="2000" name="Nature">
        <title>Sequence and analysis of chromosome 3 of the plant Arabidopsis thaliana.</title>
        <authorList>
            <person name="Salanoubat M."/>
            <person name="Lemcke K."/>
            <person name="Rieger M."/>
            <person name="Ansorge W."/>
            <person name="Unseld M."/>
            <person name="Fartmann B."/>
            <person name="Valle G."/>
            <person name="Bloecker H."/>
            <person name="Perez-Alonso M."/>
            <person name="Obermaier B."/>
            <person name="Delseny M."/>
            <person name="Boutry M."/>
            <person name="Grivell L.A."/>
            <person name="Mache R."/>
            <person name="Puigdomenech P."/>
            <person name="De Simone V."/>
            <person name="Choisne N."/>
            <person name="Artiguenave F."/>
            <person name="Robert C."/>
            <person name="Brottier P."/>
            <person name="Wincker P."/>
            <person name="Cattolico L."/>
            <person name="Weissenbach J."/>
            <person name="Saurin W."/>
            <person name="Quetier F."/>
            <person name="Schaefer M."/>
            <person name="Mueller-Auer S."/>
            <person name="Gabel C."/>
            <person name="Fuchs M."/>
            <person name="Benes V."/>
            <person name="Wurmbach E."/>
            <person name="Drzonek H."/>
            <person name="Erfle H."/>
            <person name="Jordan N."/>
            <person name="Bangert S."/>
            <person name="Wiedelmann R."/>
            <person name="Kranz H."/>
            <person name="Voss H."/>
            <person name="Holland R."/>
            <person name="Brandt P."/>
            <person name="Nyakatura G."/>
            <person name="Vezzi A."/>
            <person name="D'Angelo M."/>
            <person name="Pallavicini A."/>
            <person name="Toppo S."/>
            <person name="Simionati B."/>
            <person name="Conrad A."/>
            <person name="Hornischer K."/>
            <person name="Kauer G."/>
            <person name="Loehnert T.-H."/>
            <person name="Nordsiek G."/>
            <person name="Reichelt J."/>
            <person name="Scharfe M."/>
            <person name="Schoen O."/>
            <person name="Bargues M."/>
            <person name="Terol J."/>
            <person name="Climent J."/>
            <person name="Navarro P."/>
            <person name="Collado C."/>
            <person name="Perez-Perez A."/>
            <person name="Ottenwaelder B."/>
            <person name="Duchemin D."/>
            <person name="Cooke R."/>
            <person name="Laudie M."/>
            <person name="Berger-Llauro C."/>
            <person name="Purnelle B."/>
            <person name="Masuy D."/>
            <person name="de Haan M."/>
            <person name="Maarse A.C."/>
            <person name="Alcaraz J.-P."/>
            <person name="Cottet A."/>
            <person name="Casacuberta E."/>
            <person name="Monfort A."/>
            <person name="Argiriou A."/>
            <person name="Flores M."/>
            <person name="Liguori R."/>
            <person name="Vitale D."/>
            <person name="Mannhaupt G."/>
            <person name="Haase D."/>
            <person name="Schoof H."/>
            <person name="Rudd S."/>
            <person name="Zaccaria P."/>
            <person name="Mewes H.-W."/>
            <person name="Mayer K.F.X."/>
            <person name="Kaul S."/>
            <person name="Town C.D."/>
            <person name="Koo H.L."/>
            <person name="Tallon L.J."/>
            <person name="Jenkins J."/>
            <person name="Rooney T."/>
            <person name="Rizzo M."/>
            <person name="Walts A."/>
            <person name="Utterback T."/>
            <person name="Fujii C.Y."/>
            <person name="Shea T.P."/>
            <person name="Creasy T.H."/>
            <person name="Haas B."/>
            <person name="Maiti R."/>
            <person name="Wu D."/>
            <person name="Peterson J."/>
            <person name="Van Aken S."/>
            <person name="Pai G."/>
            <person name="Militscher J."/>
            <person name="Sellers P."/>
            <person name="Gill J.E."/>
            <person name="Feldblyum T.V."/>
            <person name="Preuss D."/>
            <person name="Lin X."/>
            <person name="Nierman W.C."/>
            <person name="Salzberg S.L."/>
            <person name="White O."/>
            <person name="Venter J.C."/>
            <person name="Fraser C.M."/>
            <person name="Kaneko T."/>
            <person name="Nakamura Y."/>
            <person name="Sato S."/>
            <person name="Kato T."/>
            <person name="Asamizu E."/>
            <person name="Sasamoto S."/>
            <person name="Kimura T."/>
            <person name="Idesawa K."/>
            <person name="Kawashima K."/>
            <person name="Kishida Y."/>
            <person name="Kiyokawa C."/>
            <person name="Kohara M."/>
            <person name="Matsumoto M."/>
            <person name="Matsuno A."/>
            <person name="Muraki A."/>
            <person name="Nakayama S."/>
            <person name="Nakazaki N."/>
            <person name="Shinpo S."/>
            <person name="Takeuchi C."/>
            <person name="Wada T."/>
            <person name="Watanabe A."/>
            <person name="Yamada M."/>
            <person name="Yasuda M."/>
            <person name="Tabata S."/>
        </authorList>
    </citation>
    <scope>NUCLEOTIDE SEQUENCE [LARGE SCALE GENOMIC DNA]</scope>
    <source>
        <strain>cv. Columbia</strain>
        <tissue>Rosette leaf</tissue>
    </source>
</reference>
<reference key="3">
    <citation type="journal article" date="2017" name="Plant J.">
        <title>Araport11: a complete reannotation of the Arabidopsis thaliana reference genome.</title>
        <authorList>
            <person name="Cheng C.Y."/>
            <person name="Krishnakumar V."/>
            <person name="Chan A.P."/>
            <person name="Thibaud-Nissen F."/>
            <person name="Schobel S."/>
            <person name="Town C.D."/>
        </authorList>
    </citation>
    <scope>GENOME REANNOTATION</scope>
    <source>
        <strain>cv. Columbia</strain>
    </source>
</reference>
<reference key="4">
    <citation type="journal article" date="2009" name="DNA Res.">
        <title>Analysis of multiple occurrences of alternative splicing events in Arabidopsis thaliana using novel sequenced full-length cDNAs.</title>
        <authorList>
            <person name="Iida K."/>
            <person name="Fukami-Kobayashi K."/>
            <person name="Toyoda A."/>
            <person name="Sakaki Y."/>
            <person name="Kobayashi M."/>
            <person name="Seki M."/>
            <person name="Shinozaki K."/>
        </authorList>
    </citation>
    <scope>NUCLEOTIDE SEQUENCE [LARGE SCALE MRNA]</scope>
    <source>
        <strain>cv. Columbia</strain>
    </source>
</reference>
<reference key="5">
    <citation type="submission" date="2006-06" db="EMBL/GenBank/DDBJ databases">
        <title>Arabidopsis ORF clones.</title>
        <authorList>
            <person name="Quinitio C."/>
            <person name="Chen H."/>
            <person name="Kim C.J."/>
            <person name="Shinn P."/>
            <person name="Ecker J.R."/>
        </authorList>
    </citation>
    <scope>NUCLEOTIDE SEQUENCE [LARGE SCALE MRNA]</scope>
    <source>
        <strain>cv. Columbia</strain>
    </source>
</reference>
<reference key="6">
    <citation type="submission" date="2002-03" db="EMBL/GenBank/DDBJ databases">
        <title>Full-length cDNA from Arabidopsis thaliana.</title>
        <authorList>
            <person name="Brover V.V."/>
            <person name="Troukhan M.E."/>
            <person name="Alexandrov N.A."/>
            <person name="Lu Y.-P."/>
            <person name="Flavell R.B."/>
            <person name="Feldmann K.A."/>
        </authorList>
    </citation>
    <scope>NUCLEOTIDE SEQUENCE [LARGE SCALE MRNA]</scope>
</reference>
<reference key="7">
    <citation type="journal article" date="2003" name="Plant Cell">
        <title>Highly divergent methyltransferases catalyze a conserved reaction in tocopherol and plastoquinone synthesis in cyanobacteria and photosynthetic eukaryotes.</title>
        <authorList>
            <person name="Cheng Z."/>
            <person name="Sattler S."/>
            <person name="Maeda H."/>
            <person name="Sakuragi Y."/>
            <person name="Bryant D.A."/>
            <person name="DellaPenna D."/>
        </authorList>
    </citation>
    <scope>FUNCTION</scope>
    <scope>CATALYTIC ACTIVITY</scope>
    <scope>MUTAGENESIS OF THR-94</scope>
    <scope>DISRUPTION PHENOTYPE</scope>
</reference>
<reference key="8">
    <citation type="journal article" date="2007" name="Mol. Cell. Proteomics">
        <title>Multidimensional protein identification technology (MudPIT) analysis of ubiquitinated proteins in plants.</title>
        <authorList>
            <person name="Maor R."/>
            <person name="Jones A."/>
            <person name="Nuehse T.S."/>
            <person name="Studholme D.J."/>
            <person name="Peck S.C."/>
            <person name="Shirasu K."/>
        </authorList>
    </citation>
    <scope>IDENTIFICATION BY MASS SPECTROMETRY [LARGE SCALE ANALYSIS]</scope>
    <source>
        <strain>cv. Landsberg erecta</strain>
    </source>
</reference>
<reference key="9">
    <citation type="journal article" date="2010" name="J. Biol. Chem.">
        <title>Determinants for stop-transfer and post-import pathways for protein targeting to the chloroplast inner envelope membrane.</title>
        <authorList>
            <person name="Viana A.A."/>
            <person name="Li M."/>
            <person name="Schnell D.J."/>
        </authorList>
    </citation>
    <scope>SUBCELLULAR LOCATION</scope>
    <scope>TOPOLOGY</scope>
</reference>
<feature type="transit peptide" description="Chloroplast" evidence="1">
    <location>
        <begin position="1"/>
        <end position="51"/>
    </location>
</feature>
<feature type="chain" id="PRO_0000422876" description="2-methyl-6-phytyl-1,4-hydroquinone methyltransferase, chloroplastic">
    <location>
        <begin position="52"/>
        <end position="338"/>
    </location>
</feature>
<feature type="topological domain" description="Chloroplast intermembrane" evidence="1">
    <location>
        <begin position="52"/>
        <end position="307"/>
    </location>
</feature>
<feature type="transmembrane region" description="Helical" evidence="1">
    <location>
        <begin position="308"/>
        <end position="328"/>
    </location>
</feature>
<feature type="topological domain" description="Stromal" evidence="1">
    <location>
        <begin position="329"/>
        <end position="338"/>
    </location>
</feature>
<feature type="region of interest" description="SAM motif I" evidence="2">
    <location>
        <begin position="114"/>
        <end position="123"/>
    </location>
</feature>
<feature type="region of interest" description="SAM motif II" evidence="2">
    <location>
        <begin position="159"/>
        <end position="172"/>
    </location>
</feature>
<feature type="region of interest" description="SAM motif III" evidence="2">
    <location>
        <begin position="200"/>
        <end position="213"/>
    </location>
</feature>
<feature type="mutagenesis site" description="In vte3-1; Slight reduction in plant growth." evidence="3">
    <original>T</original>
    <variation>I</variation>
    <location>
        <position position="94"/>
    </location>
</feature>
<feature type="sequence conflict" description="In Ref. 5; ABF85788." evidence="5" ref="5">
    <original>G</original>
    <variation>V</variation>
    <location>
        <position position="20"/>
    </location>
</feature>
<feature type="sequence conflict" description="In Ref. 1; BAB62076." evidence="5" ref="1">
    <original>R</original>
    <variation>K</variation>
    <location>
        <position position="26"/>
    </location>
</feature>
<feature type="sequence conflict" description="In Ref. 1; BAB62076." evidence="5" ref="1">
    <original>R</original>
    <variation>K</variation>
    <location>
        <position position="49"/>
    </location>
</feature>
<feature type="sequence conflict" description="In Ref. 6; AAM63077." evidence="5" ref="6">
    <original>C</original>
    <variation>Y</variation>
    <location>
        <position position="271"/>
    </location>
</feature>
<keyword id="KW-0150">Chloroplast</keyword>
<keyword id="KW-0472">Membrane</keyword>
<keyword id="KW-0489">Methyltransferase</keyword>
<keyword id="KW-0934">Plastid</keyword>
<keyword id="KW-1001">Plastid inner membrane</keyword>
<keyword id="KW-1185">Reference proteome</keyword>
<keyword id="KW-0949">S-adenosyl-L-methionine</keyword>
<keyword id="KW-0808">Transferase</keyword>
<keyword id="KW-0809">Transit peptide</keyword>
<keyword id="KW-0812">Transmembrane</keyword>
<keyword id="KW-1133">Transmembrane helix</keyword>
<accession>Q9LY74</accession>
<accession>Q1EC48</accession>
<accession>Q8LDQ3</accession>
<accession>Q94IE2</accession>
<gene>
    <name type="primary">VTE3</name>
    <name type="synonym">APG1</name>
    <name type="synonym">IE37</name>
    <name type="ordered locus">At3g63410</name>
    <name type="ORF">MAA21.40</name>
</gene>
<organism>
    <name type="scientific">Arabidopsis thaliana</name>
    <name type="common">Mouse-ear cress</name>
    <dbReference type="NCBI Taxonomy" id="3702"/>
    <lineage>
        <taxon>Eukaryota</taxon>
        <taxon>Viridiplantae</taxon>
        <taxon>Streptophyta</taxon>
        <taxon>Embryophyta</taxon>
        <taxon>Tracheophyta</taxon>
        <taxon>Spermatophyta</taxon>
        <taxon>Magnoliopsida</taxon>
        <taxon>eudicotyledons</taxon>
        <taxon>Gunneridae</taxon>
        <taxon>Pentapetalae</taxon>
        <taxon>rosids</taxon>
        <taxon>malvids</taxon>
        <taxon>Brassicales</taxon>
        <taxon>Brassicaceae</taxon>
        <taxon>Camelineae</taxon>
        <taxon>Arabidopsis</taxon>
    </lineage>
</organism>
<comment type="function">
    <text evidence="3">Involved in a key methylation step in both tocopherols (vitamin E) and plastoquinone synthesis. Catalyzes the conversion of 2-methyl-6-phytyl-1,4-hydroquinone (MPBQ) to 2,3-dimethyl-6-phytyl-1,4-hydroquinone (DMPQ, a substrate for tocopherol cyclase), and 2-methyl-6-solanyl-1,4-benzoquinone (MSBQ) to plastoquinone.</text>
</comment>
<comment type="catalytic activity">
    <reaction evidence="3">
        <text>2-methyl-6-phytyl-1,4-benzene-1,4-diol + S-adenosyl-L-methionine = 2,3-dimethyl-6-phytylbenzene-1,4-diol + S-adenosyl-L-homocysteine + H(+)</text>
        <dbReference type="Rhea" id="RHEA:37979"/>
        <dbReference type="ChEBI" id="CHEBI:15378"/>
        <dbReference type="ChEBI" id="CHEBI:57856"/>
        <dbReference type="ChEBI" id="CHEBI:59789"/>
        <dbReference type="ChEBI" id="CHEBI:75920"/>
        <dbReference type="ChEBI" id="CHEBI:75921"/>
        <dbReference type="EC" id="2.1.1.295"/>
    </reaction>
</comment>
<comment type="catalytic activity">
    <reaction evidence="3">
        <text>2-methyl-6-(all-trans-nonaprenyl)benzene-1,4-diol + S-adenosyl-L-methionine = plastoquinol-9 + S-adenosyl-L-homocysteine + H(+)</text>
        <dbReference type="Rhea" id="RHEA:37999"/>
        <dbReference type="ChEBI" id="CHEBI:15378"/>
        <dbReference type="ChEBI" id="CHEBI:28026"/>
        <dbReference type="ChEBI" id="CHEBI:57856"/>
        <dbReference type="ChEBI" id="CHEBI:59789"/>
        <dbReference type="ChEBI" id="CHEBI:75402"/>
        <dbReference type="EC" id="2.1.1.295"/>
    </reaction>
</comment>
<comment type="catalytic activity">
    <reaction evidence="3">
        <text>6-geranylgeranyl-2-methylbenzene-1,4-diol + S-adenosyl-L-methionine = 6-geranylgeranyl-2,3-dimethylbenzene-1,4-diol + S-adenosyl-L-homocysteine + H(+)</text>
        <dbReference type="Rhea" id="RHEA:38007"/>
        <dbReference type="ChEBI" id="CHEBI:15378"/>
        <dbReference type="ChEBI" id="CHEBI:57856"/>
        <dbReference type="ChEBI" id="CHEBI:59789"/>
        <dbReference type="ChEBI" id="CHEBI:75411"/>
        <dbReference type="ChEBI" id="CHEBI:75412"/>
        <dbReference type="EC" id="2.1.1.295"/>
    </reaction>
</comment>
<comment type="pathway">
    <text>Cofactor biosynthesis; tocopherol biosynthesis.</text>
</comment>
<comment type="subcellular location">
    <subcellularLocation>
        <location evidence="4">Plastid</location>
        <location evidence="4">Chloroplast inner membrane</location>
        <topology evidence="4">Single-pass membrane protein</topology>
    </subcellularLocation>
    <text evidence="4">The transmembrane domain is sufficient to direct stop-transfer insertion and topology in the inner envelope membrane.</text>
</comment>
<comment type="disruption phenotype">
    <text evidence="3">Pale green seedlings that are lethal when grown on normal conditions.</text>
</comment>
<comment type="similarity">
    <text evidence="2">Belongs to the class I-like SAM-binding methyltransferase superfamily. MPBQ/MBSQ MT family.</text>
</comment>
<proteinExistence type="evidence at protein level"/>
<sequence length="338" mass="37927">MASLMLNGAITFPKGLGSPGSNLHARSIPRPTLLSVTRTSTPRLSVATRCSSSSVSSSRPSAQPRFIQHKKEAYWFYRFLSIVYDHVINPGHWTEDMRDDALEPADLSHPDMRVVDVGGGTGFTTLGIVKTVKAKNVTILDQSPHQLAKAKQKEPLKECKIVEGDAEDLPFPTDYADRYVSAGSIEYWPDPQRGIREAYRVLKIGGKACLIGPVYPTFWLSRFFSDVWMLFPKEEEYIEWFKNAGFKDVQLKRIGPKWYRGVRRHGLIMGCSVTGVKPASGDSPLQLGPKEEDVEKPVNNPFSFLGRFLLGTLAAAWFVLIPIYMWIKDQIVPKDQPI</sequence>
<evidence type="ECO:0000255" key="1"/>
<evidence type="ECO:0000255" key="2">
    <source>
        <dbReference type="PROSITE-ProRule" id="PRU01069"/>
    </source>
</evidence>
<evidence type="ECO:0000269" key="3">
    <source>
    </source>
</evidence>
<evidence type="ECO:0000269" key="4">
    <source>
    </source>
</evidence>
<evidence type="ECO:0000305" key="5"/>
<protein>
    <recommendedName>
        <fullName>2-methyl-6-phytyl-1,4-hydroquinone methyltransferase, chloroplastic</fullName>
        <ecNumber>2.1.1.295</ecNumber>
    </recommendedName>
    <alternativeName>
        <fullName>37 kDa inner envelope membrane protein</fullName>
        <shortName>E37</shortName>
    </alternativeName>
    <alternativeName>
        <fullName>MPBQ/MSBQ methyltransferase</fullName>
    </alternativeName>
    <alternativeName>
        <fullName>Protein ALBINO OR PALE GREEN MUTANT 1</fullName>
    </alternativeName>
    <alternativeName>
        <fullName>Protein INNER ENVELOPE PROTEIN 37</fullName>
    </alternativeName>
    <alternativeName>
        <fullName>Protein VITAMIN E DEFECTIVE 3</fullName>
    </alternativeName>
</protein>
<name>BQMT_ARATH</name>